<proteinExistence type="inferred from homology"/>
<keyword id="KW-0489">Methyltransferase</keyword>
<keyword id="KW-0694">RNA-binding</keyword>
<keyword id="KW-0698">rRNA processing</keyword>
<keyword id="KW-0808">Transferase</keyword>
<keyword id="KW-0819">tRNA processing</keyword>
<protein>
    <recommendedName>
        <fullName evidence="1">Fibrillarin-like rRNA/tRNA 2'-O-methyltransferase</fullName>
        <ecNumber evidence="1">2.1.1.-</ecNumber>
    </recommendedName>
</protein>
<organism>
    <name type="scientific">Saccharolobus islandicus (strain M.16.4 / Kamchatka #3)</name>
    <name type="common">Sulfolobus islandicus</name>
    <dbReference type="NCBI Taxonomy" id="426118"/>
    <lineage>
        <taxon>Archaea</taxon>
        <taxon>Thermoproteota</taxon>
        <taxon>Thermoprotei</taxon>
        <taxon>Sulfolobales</taxon>
        <taxon>Sulfolobaceae</taxon>
        <taxon>Saccharolobus</taxon>
    </lineage>
</organism>
<evidence type="ECO:0000255" key="1">
    <source>
        <dbReference type="HAMAP-Rule" id="MF_00351"/>
    </source>
</evidence>
<gene>
    <name evidence="1" type="primary">flpA</name>
    <name type="ordered locus">M164_1270</name>
</gene>
<feature type="chain" id="PRO_1000205342" description="Fibrillarin-like rRNA/tRNA 2'-O-methyltransferase">
    <location>
        <begin position="1"/>
        <end position="232"/>
    </location>
</feature>
<feature type="binding site" evidence="1">
    <location>
        <begin position="89"/>
        <end position="90"/>
    </location>
    <ligand>
        <name>S-adenosyl-L-methionine</name>
        <dbReference type="ChEBI" id="CHEBI:59789"/>
    </ligand>
</feature>
<feature type="binding site" evidence="1">
    <location>
        <begin position="108"/>
        <end position="109"/>
    </location>
    <ligand>
        <name>S-adenosyl-L-methionine</name>
        <dbReference type="ChEBI" id="CHEBI:59789"/>
    </ligand>
</feature>
<feature type="binding site" evidence="1">
    <location>
        <begin position="133"/>
        <end position="134"/>
    </location>
    <ligand>
        <name>S-adenosyl-L-methionine</name>
        <dbReference type="ChEBI" id="CHEBI:59789"/>
    </ligand>
</feature>
<feature type="binding site" evidence="1">
    <location>
        <begin position="153"/>
        <end position="156"/>
    </location>
    <ligand>
        <name>S-adenosyl-L-methionine</name>
        <dbReference type="ChEBI" id="CHEBI:59789"/>
    </ligand>
</feature>
<sequence length="232" mass="26415">MSEVVTVKQTNMENIYECEFNDGSFRLCTRNLVSGFNVYGERLIKYEGVEYREWNAFRSKLAGAILKGLKTNPIRKGTKVLYLGAASGTTISHVSDIIELNGKAYGVEFSPRVVRELLLVAQRRPNIFPLLADARFPQSYKSVVENVDVLYVDIAQPDQTDIAIYNARFFLKVNGYMLLVIKARSIDVTKDPKEIYKAEVEKLENSNFETIQIINLDPYDKDHAIVLSRYKG</sequence>
<comment type="function">
    <text evidence="1">Involved in pre-rRNA and tRNA processing. Utilizes the methyl donor S-adenosyl-L-methionine to catalyze the site-specific 2'-hydroxyl methylation of ribose moieties in rRNA and tRNA. Site specificity is provided by a guide RNA that base pairs with the substrate. Methylation occurs at a characteristic distance from the sequence involved in base pairing with the guide RNA.</text>
</comment>
<comment type="subunit">
    <text evidence="1">Interacts with nop5. Component of box C/D small ribonucleoprotein (sRNP) particles that contain rpl7ae, FlpA and nop5, plus a guide RNA.</text>
</comment>
<comment type="similarity">
    <text evidence="1">Belongs to the methyltransferase superfamily. Fibrillarin family.</text>
</comment>
<reference key="1">
    <citation type="journal article" date="2009" name="Proc. Natl. Acad. Sci. U.S.A.">
        <title>Biogeography of the Sulfolobus islandicus pan-genome.</title>
        <authorList>
            <person name="Reno M.L."/>
            <person name="Held N.L."/>
            <person name="Fields C.J."/>
            <person name="Burke P.V."/>
            <person name="Whitaker R.J."/>
        </authorList>
    </citation>
    <scope>NUCLEOTIDE SEQUENCE [LARGE SCALE GENOMIC DNA]</scope>
    <source>
        <strain>M.16.4 / Kamchatka #3</strain>
    </source>
</reference>
<accession>C4KH10</accession>
<dbReference type="EC" id="2.1.1.-" evidence="1"/>
<dbReference type="EMBL" id="CP001402">
    <property type="protein sequence ID" value="ACR41874.1"/>
    <property type="molecule type" value="Genomic_DNA"/>
</dbReference>
<dbReference type="RefSeq" id="WP_012711293.1">
    <property type="nucleotide sequence ID" value="NC_012726.1"/>
</dbReference>
<dbReference type="SMR" id="C4KH10"/>
<dbReference type="GeneID" id="84061600"/>
<dbReference type="KEGG" id="sid:M164_1270"/>
<dbReference type="HOGENOM" id="CLU_059055_2_0_2"/>
<dbReference type="Proteomes" id="UP000001479">
    <property type="component" value="Chromosome"/>
</dbReference>
<dbReference type="GO" id="GO:1990259">
    <property type="term" value="F:histone H2AQ104 methyltransferase activity"/>
    <property type="evidence" value="ECO:0007669"/>
    <property type="project" value="TreeGrafter"/>
</dbReference>
<dbReference type="GO" id="GO:0003723">
    <property type="term" value="F:RNA binding"/>
    <property type="evidence" value="ECO:0007669"/>
    <property type="project" value="UniProtKB-UniRule"/>
</dbReference>
<dbReference type="GO" id="GO:0008649">
    <property type="term" value="F:rRNA methyltransferase activity"/>
    <property type="evidence" value="ECO:0007669"/>
    <property type="project" value="TreeGrafter"/>
</dbReference>
<dbReference type="GO" id="GO:0000494">
    <property type="term" value="P:box C/D sno(s)RNA 3'-end processing"/>
    <property type="evidence" value="ECO:0007669"/>
    <property type="project" value="TreeGrafter"/>
</dbReference>
<dbReference type="GO" id="GO:0008033">
    <property type="term" value="P:tRNA processing"/>
    <property type="evidence" value="ECO:0007669"/>
    <property type="project" value="UniProtKB-UniRule"/>
</dbReference>
<dbReference type="CDD" id="cd02440">
    <property type="entry name" value="AdoMet_MTases"/>
    <property type="match status" value="1"/>
</dbReference>
<dbReference type="FunFam" id="3.30.200.20:FF:000613">
    <property type="entry name" value="Fibrillarin-like rRNA/tRNA 2'-O-methyltransferase"/>
    <property type="match status" value="1"/>
</dbReference>
<dbReference type="Gene3D" id="3.30.200.20">
    <property type="entry name" value="Phosphorylase Kinase, domain 1"/>
    <property type="match status" value="1"/>
</dbReference>
<dbReference type="Gene3D" id="3.40.50.150">
    <property type="entry name" value="Vaccinia Virus protein VP39"/>
    <property type="match status" value="1"/>
</dbReference>
<dbReference type="HAMAP" id="MF_00351">
    <property type="entry name" value="RNA_methyltransf_FlpA"/>
    <property type="match status" value="1"/>
</dbReference>
<dbReference type="InterPro" id="IPR000692">
    <property type="entry name" value="Fibrillarin"/>
</dbReference>
<dbReference type="InterPro" id="IPR020813">
    <property type="entry name" value="Fibrillarin_CS"/>
</dbReference>
<dbReference type="InterPro" id="IPR029063">
    <property type="entry name" value="SAM-dependent_MTases_sf"/>
</dbReference>
<dbReference type="NCBIfam" id="NF003275">
    <property type="entry name" value="PRK04266.1-1"/>
    <property type="match status" value="1"/>
</dbReference>
<dbReference type="NCBIfam" id="NF003276">
    <property type="entry name" value="PRK04266.1-2"/>
    <property type="match status" value="1"/>
</dbReference>
<dbReference type="NCBIfam" id="NF003277">
    <property type="entry name" value="PRK04266.1-3"/>
    <property type="match status" value="1"/>
</dbReference>
<dbReference type="PANTHER" id="PTHR10335:SF17">
    <property type="entry name" value="FIBRILLARIN"/>
    <property type="match status" value="1"/>
</dbReference>
<dbReference type="PANTHER" id="PTHR10335">
    <property type="entry name" value="RRNA 2-O-METHYLTRANSFERASE FIBRILLARIN"/>
    <property type="match status" value="1"/>
</dbReference>
<dbReference type="Pfam" id="PF01269">
    <property type="entry name" value="Fibrillarin"/>
    <property type="match status" value="1"/>
</dbReference>
<dbReference type="PIRSF" id="PIRSF006540">
    <property type="entry name" value="Nop17p"/>
    <property type="match status" value="1"/>
</dbReference>
<dbReference type="PRINTS" id="PR00052">
    <property type="entry name" value="FIBRILLARIN"/>
</dbReference>
<dbReference type="SMART" id="SM01206">
    <property type="entry name" value="Fibrillarin"/>
    <property type="match status" value="1"/>
</dbReference>
<dbReference type="SUPFAM" id="SSF53335">
    <property type="entry name" value="S-adenosyl-L-methionine-dependent methyltransferases"/>
    <property type="match status" value="1"/>
</dbReference>
<dbReference type="PROSITE" id="PS00566">
    <property type="entry name" value="FIBRILLARIN"/>
    <property type="match status" value="1"/>
</dbReference>
<name>FLPA_SACI6</name>